<comment type="function">
    <text evidence="1">One of the early assembly proteins it binds 23S rRNA. One of the proteins that surrounds the polypeptide exit tunnel on the outside of the ribosome. Forms the main docking site for trigger factor binding to the ribosome.</text>
</comment>
<comment type="subunit">
    <text evidence="1">Part of the 50S ribosomal subunit. Contacts protein L29, and trigger factor when it is bound to the ribosome.</text>
</comment>
<comment type="similarity">
    <text evidence="1">Belongs to the universal ribosomal protein uL23 family.</text>
</comment>
<gene>
    <name evidence="1" type="primary">rplW</name>
    <name type="ordered locus">PSPPH_4590</name>
</gene>
<keyword id="KW-0687">Ribonucleoprotein</keyword>
<keyword id="KW-0689">Ribosomal protein</keyword>
<keyword id="KW-0694">RNA-binding</keyword>
<keyword id="KW-0699">rRNA-binding</keyword>
<sequence>MNQERVFKVLLGPHVSEKATVLADKKGQFVFKVATDATKLEIKKAVESLFSVQVERVTTLNVLGKSKRTARGLGKRNDWKKAVISLQPGQDLDFSSSAE</sequence>
<accession>Q48D38</accession>
<protein>
    <recommendedName>
        <fullName evidence="1">Large ribosomal subunit protein uL23</fullName>
    </recommendedName>
    <alternativeName>
        <fullName evidence="2">50S ribosomal protein L23</fullName>
    </alternativeName>
</protein>
<organism>
    <name type="scientific">Pseudomonas savastanoi pv. phaseolicola (strain 1448A / Race 6)</name>
    <name type="common">Pseudomonas syringae pv. phaseolicola (strain 1448A / Race 6)</name>
    <dbReference type="NCBI Taxonomy" id="264730"/>
    <lineage>
        <taxon>Bacteria</taxon>
        <taxon>Pseudomonadati</taxon>
        <taxon>Pseudomonadota</taxon>
        <taxon>Gammaproteobacteria</taxon>
        <taxon>Pseudomonadales</taxon>
        <taxon>Pseudomonadaceae</taxon>
        <taxon>Pseudomonas</taxon>
    </lineage>
</organism>
<dbReference type="EMBL" id="CP000058">
    <property type="protein sequence ID" value="AAZ35665.1"/>
    <property type="molecule type" value="Genomic_DNA"/>
</dbReference>
<dbReference type="RefSeq" id="WP_011169628.1">
    <property type="nucleotide sequence ID" value="NC_005773.3"/>
</dbReference>
<dbReference type="SMR" id="Q48D38"/>
<dbReference type="KEGG" id="psp:PSPPH_4590"/>
<dbReference type="eggNOG" id="COG0089">
    <property type="taxonomic scope" value="Bacteria"/>
</dbReference>
<dbReference type="HOGENOM" id="CLU_037562_3_1_6"/>
<dbReference type="Proteomes" id="UP000000551">
    <property type="component" value="Chromosome"/>
</dbReference>
<dbReference type="GO" id="GO:1990904">
    <property type="term" value="C:ribonucleoprotein complex"/>
    <property type="evidence" value="ECO:0007669"/>
    <property type="project" value="UniProtKB-KW"/>
</dbReference>
<dbReference type="GO" id="GO:0005840">
    <property type="term" value="C:ribosome"/>
    <property type="evidence" value="ECO:0007669"/>
    <property type="project" value="UniProtKB-KW"/>
</dbReference>
<dbReference type="GO" id="GO:0019843">
    <property type="term" value="F:rRNA binding"/>
    <property type="evidence" value="ECO:0007669"/>
    <property type="project" value="UniProtKB-UniRule"/>
</dbReference>
<dbReference type="GO" id="GO:0003735">
    <property type="term" value="F:structural constituent of ribosome"/>
    <property type="evidence" value="ECO:0007669"/>
    <property type="project" value="InterPro"/>
</dbReference>
<dbReference type="GO" id="GO:0006412">
    <property type="term" value="P:translation"/>
    <property type="evidence" value="ECO:0007669"/>
    <property type="project" value="UniProtKB-UniRule"/>
</dbReference>
<dbReference type="FunFam" id="3.30.70.330:FF:000001">
    <property type="entry name" value="50S ribosomal protein L23"/>
    <property type="match status" value="1"/>
</dbReference>
<dbReference type="Gene3D" id="3.30.70.330">
    <property type="match status" value="1"/>
</dbReference>
<dbReference type="HAMAP" id="MF_01369_B">
    <property type="entry name" value="Ribosomal_uL23_B"/>
    <property type="match status" value="1"/>
</dbReference>
<dbReference type="InterPro" id="IPR012677">
    <property type="entry name" value="Nucleotide-bd_a/b_plait_sf"/>
</dbReference>
<dbReference type="InterPro" id="IPR013025">
    <property type="entry name" value="Ribosomal_uL23-like"/>
</dbReference>
<dbReference type="InterPro" id="IPR012678">
    <property type="entry name" value="Ribosomal_uL23/eL15/eS24_sf"/>
</dbReference>
<dbReference type="NCBIfam" id="NF004359">
    <property type="entry name" value="PRK05738.1-3"/>
    <property type="match status" value="1"/>
</dbReference>
<dbReference type="NCBIfam" id="NF004363">
    <property type="entry name" value="PRK05738.2-4"/>
    <property type="match status" value="1"/>
</dbReference>
<dbReference type="PANTHER" id="PTHR11620">
    <property type="entry name" value="60S RIBOSOMAL PROTEIN L23A"/>
    <property type="match status" value="1"/>
</dbReference>
<dbReference type="Pfam" id="PF00276">
    <property type="entry name" value="Ribosomal_L23"/>
    <property type="match status" value="1"/>
</dbReference>
<dbReference type="SUPFAM" id="SSF54189">
    <property type="entry name" value="Ribosomal proteins S24e, L23 and L15e"/>
    <property type="match status" value="1"/>
</dbReference>
<evidence type="ECO:0000255" key="1">
    <source>
        <dbReference type="HAMAP-Rule" id="MF_01369"/>
    </source>
</evidence>
<evidence type="ECO:0000305" key="2"/>
<feature type="chain" id="PRO_0000272808" description="Large ribosomal subunit protein uL23">
    <location>
        <begin position="1"/>
        <end position="99"/>
    </location>
</feature>
<reference key="1">
    <citation type="journal article" date="2005" name="J. Bacteriol.">
        <title>Whole-genome sequence analysis of Pseudomonas syringae pv. phaseolicola 1448A reveals divergence among pathovars in genes involved in virulence and transposition.</title>
        <authorList>
            <person name="Joardar V."/>
            <person name="Lindeberg M."/>
            <person name="Jackson R.W."/>
            <person name="Selengut J."/>
            <person name="Dodson R."/>
            <person name="Brinkac L.M."/>
            <person name="Daugherty S.C."/>
            <person name="DeBoy R.T."/>
            <person name="Durkin A.S."/>
            <person name="Gwinn Giglio M."/>
            <person name="Madupu R."/>
            <person name="Nelson W.C."/>
            <person name="Rosovitz M.J."/>
            <person name="Sullivan S.A."/>
            <person name="Crabtree J."/>
            <person name="Creasy T."/>
            <person name="Davidsen T.M."/>
            <person name="Haft D.H."/>
            <person name="Zafar N."/>
            <person name="Zhou L."/>
            <person name="Halpin R."/>
            <person name="Holley T."/>
            <person name="Khouri H.M."/>
            <person name="Feldblyum T.V."/>
            <person name="White O."/>
            <person name="Fraser C.M."/>
            <person name="Chatterjee A.K."/>
            <person name="Cartinhour S."/>
            <person name="Schneider D."/>
            <person name="Mansfield J.W."/>
            <person name="Collmer A."/>
            <person name="Buell R."/>
        </authorList>
    </citation>
    <scope>NUCLEOTIDE SEQUENCE [LARGE SCALE GENOMIC DNA]</scope>
    <source>
        <strain>1448A / Race 6</strain>
    </source>
</reference>
<proteinExistence type="inferred from homology"/>
<name>RL23_PSE14</name>